<sequence>MSIVNGLVNRIDETYDVSQIEKEIKLDNIALSDLELLATGGYSPLTGFLGEEDYDSVVETLRLANGSVWSIPITLPVTEKVAESLKAGEEVKLVNNGNIYGVIQIEDIFVPDKEKEALLVYKTTDEAHPGVKKLYERPNVYVGGTIILTKRFENNQFPSYHLDPIETREAFKKRGWKTVVGFQTRNPVHRAHEYIQKSALEIVDGLFLNPLVGETKSDDIPADVRMESYEVLLQNYYPKNRVFLSVFPAAMRYAGPREAIFHALVRKNFGCTHFIVGRDHAGVGDYYGTYEAQEIFTNFTIEELGITPLFFEHSFYCTKCEAMASTKTCPHGKEDHVILSGTKVRELLRNGEIPPSTFSRKEVVEVLIKGLKKEVVTE</sequence>
<accession>B7HHH7</accession>
<organism>
    <name type="scientific">Bacillus cereus (strain B4264)</name>
    <dbReference type="NCBI Taxonomy" id="405532"/>
    <lineage>
        <taxon>Bacteria</taxon>
        <taxon>Bacillati</taxon>
        <taxon>Bacillota</taxon>
        <taxon>Bacilli</taxon>
        <taxon>Bacillales</taxon>
        <taxon>Bacillaceae</taxon>
        <taxon>Bacillus</taxon>
        <taxon>Bacillus cereus group</taxon>
    </lineage>
</organism>
<keyword id="KW-0067">ATP-binding</keyword>
<keyword id="KW-0547">Nucleotide-binding</keyword>
<keyword id="KW-0548">Nucleotidyltransferase</keyword>
<keyword id="KW-0808">Transferase</keyword>
<name>SAT_BACC4</name>
<feature type="chain" id="PRO_1000116975" description="Sulfate adenylyltransferase">
    <location>
        <begin position="1"/>
        <end position="378"/>
    </location>
</feature>
<gene>
    <name evidence="1" type="primary">sat</name>
    <name type="ordered locus">BCB4264_A1477</name>
</gene>
<proteinExistence type="inferred from homology"/>
<protein>
    <recommendedName>
        <fullName evidence="1">Sulfate adenylyltransferase</fullName>
        <ecNumber evidence="1">2.7.7.4</ecNumber>
    </recommendedName>
    <alternativeName>
        <fullName evidence="1">ATP-sulfurylase</fullName>
    </alternativeName>
    <alternativeName>
        <fullName evidence="1">Sulfate adenylate transferase</fullName>
        <shortName evidence="1">SAT</shortName>
    </alternativeName>
</protein>
<comment type="catalytic activity">
    <reaction evidence="1">
        <text>sulfate + ATP + H(+) = adenosine 5'-phosphosulfate + diphosphate</text>
        <dbReference type="Rhea" id="RHEA:18133"/>
        <dbReference type="ChEBI" id="CHEBI:15378"/>
        <dbReference type="ChEBI" id="CHEBI:16189"/>
        <dbReference type="ChEBI" id="CHEBI:30616"/>
        <dbReference type="ChEBI" id="CHEBI:33019"/>
        <dbReference type="ChEBI" id="CHEBI:58243"/>
        <dbReference type="EC" id="2.7.7.4"/>
    </reaction>
</comment>
<comment type="pathway">
    <text evidence="1">Sulfur metabolism; hydrogen sulfide biosynthesis; sulfite from sulfate: step 1/3.</text>
</comment>
<comment type="similarity">
    <text evidence="1">Belongs to the sulfate adenylyltransferase family.</text>
</comment>
<evidence type="ECO:0000255" key="1">
    <source>
        <dbReference type="HAMAP-Rule" id="MF_00066"/>
    </source>
</evidence>
<reference key="1">
    <citation type="submission" date="2008-10" db="EMBL/GenBank/DDBJ databases">
        <title>Genome sequence of Bacillus cereus B4264.</title>
        <authorList>
            <person name="Dodson R.J."/>
            <person name="Durkin A.S."/>
            <person name="Rosovitz M.J."/>
            <person name="Rasko D.A."/>
            <person name="Hoffmaster A."/>
            <person name="Ravel J."/>
            <person name="Sutton G."/>
        </authorList>
    </citation>
    <scope>NUCLEOTIDE SEQUENCE [LARGE SCALE GENOMIC DNA]</scope>
    <source>
        <strain>B4264</strain>
    </source>
</reference>
<dbReference type="EC" id="2.7.7.4" evidence="1"/>
<dbReference type="EMBL" id="CP001176">
    <property type="protein sequence ID" value="ACK63335.1"/>
    <property type="molecule type" value="Genomic_DNA"/>
</dbReference>
<dbReference type="RefSeq" id="WP_000029495.1">
    <property type="nucleotide sequence ID" value="NC_011725.1"/>
</dbReference>
<dbReference type="SMR" id="B7HHH7"/>
<dbReference type="KEGG" id="bcb:BCB4264_A1477"/>
<dbReference type="HOGENOM" id="CLU_022950_1_1_9"/>
<dbReference type="UniPathway" id="UPA00140">
    <property type="reaction ID" value="UER00204"/>
</dbReference>
<dbReference type="Proteomes" id="UP000007096">
    <property type="component" value="Chromosome"/>
</dbReference>
<dbReference type="GO" id="GO:0005524">
    <property type="term" value="F:ATP binding"/>
    <property type="evidence" value="ECO:0007669"/>
    <property type="project" value="UniProtKB-KW"/>
</dbReference>
<dbReference type="GO" id="GO:0004781">
    <property type="term" value="F:sulfate adenylyltransferase (ATP) activity"/>
    <property type="evidence" value="ECO:0007669"/>
    <property type="project" value="UniProtKB-UniRule"/>
</dbReference>
<dbReference type="GO" id="GO:0070814">
    <property type="term" value="P:hydrogen sulfide biosynthetic process"/>
    <property type="evidence" value="ECO:0007669"/>
    <property type="project" value="UniProtKB-UniRule"/>
</dbReference>
<dbReference type="GO" id="GO:0000103">
    <property type="term" value="P:sulfate assimilation"/>
    <property type="evidence" value="ECO:0007669"/>
    <property type="project" value="UniProtKB-UniRule"/>
</dbReference>
<dbReference type="CDD" id="cd00517">
    <property type="entry name" value="ATPS"/>
    <property type="match status" value="1"/>
</dbReference>
<dbReference type="Gene3D" id="3.40.50.620">
    <property type="entry name" value="HUPs"/>
    <property type="match status" value="1"/>
</dbReference>
<dbReference type="Gene3D" id="3.10.400.10">
    <property type="entry name" value="Sulfate adenylyltransferase"/>
    <property type="match status" value="1"/>
</dbReference>
<dbReference type="HAMAP" id="MF_00066">
    <property type="entry name" value="Sulf_adenylyltr"/>
    <property type="match status" value="1"/>
</dbReference>
<dbReference type="InterPro" id="IPR025980">
    <property type="entry name" value="ATP-Sase_PUA-like_dom"/>
</dbReference>
<dbReference type="InterPro" id="IPR015947">
    <property type="entry name" value="PUA-like_sf"/>
</dbReference>
<dbReference type="InterPro" id="IPR014729">
    <property type="entry name" value="Rossmann-like_a/b/a_fold"/>
</dbReference>
<dbReference type="InterPro" id="IPR020792">
    <property type="entry name" value="SO4_adenylyltransferase_pro"/>
</dbReference>
<dbReference type="InterPro" id="IPR024951">
    <property type="entry name" value="Sulfurylase_cat_dom"/>
</dbReference>
<dbReference type="InterPro" id="IPR002650">
    <property type="entry name" value="Sulphate_adenylyltransferase"/>
</dbReference>
<dbReference type="NCBIfam" id="NF003166">
    <property type="entry name" value="PRK04149.1"/>
    <property type="match status" value="1"/>
</dbReference>
<dbReference type="NCBIfam" id="TIGR00339">
    <property type="entry name" value="sopT"/>
    <property type="match status" value="1"/>
</dbReference>
<dbReference type="PANTHER" id="PTHR43509">
    <property type="match status" value="1"/>
</dbReference>
<dbReference type="PANTHER" id="PTHR43509:SF1">
    <property type="entry name" value="SULFATE ADENYLYLTRANSFERASE"/>
    <property type="match status" value="1"/>
</dbReference>
<dbReference type="Pfam" id="PF01747">
    <property type="entry name" value="ATP-sulfurylase"/>
    <property type="match status" value="1"/>
</dbReference>
<dbReference type="Pfam" id="PF14306">
    <property type="entry name" value="PUA_2"/>
    <property type="match status" value="1"/>
</dbReference>
<dbReference type="SUPFAM" id="SSF52374">
    <property type="entry name" value="Nucleotidylyl transferase"/>
    <property type="match status" value="1"/>
</dbReference>
<dbReference type="SUPFAM" id="SSF88697">
    <property type="entry name" value="PUA domain-like"/>
    <property type="match status" value="1"/>
</dbReference>